<gene>
    <name evidence="1" type="primary">lipA</name>
    <name type="ordered locus">cauri_1717</name>
</gene>
<name>LIPA_CORA7</name>
<dbReference type="EC" id="2.8.1.8" evidence="1"/>
<dbReference type="EMBL" id="CP001601">
    <property type="protein sequence ID" value="ACP33310.1"/>
    <property type="molecule type" value="Genomic_DNA"/>
</dbReference>
<dbReference type="SMR" id="C3PHK6"/>
<dbReference type="STRING" id="548476.cauri_1717"/>
<dbReference type="KEGG" id="car:cauri_1717"/>
<dbReference type="eggNOG" id="COG0320">
    <property type="taxonomic scope" value="Bacteria"/>
</dbReference>
<dbReference type="HOGENOM" id="CLU_033144_2_1_11"/>
<dbReference type="UniPathway" id="UPA00538">
    <property type="reaction ID" value="UER00593"/>
</dbReference>
<dbReference type="Proteomes" id="UP000002077">
    <property type="component" value="Chromosome"/>
</dbReference>
<dbReference type="GO" id="GO:0005737">
    <property type="term" value="C:cytoplasm"/>
    <property type="evidence" value="ECO:0007669"/>
    <property type="project" value="UniProtKB-SubCell"/>
</dbReference>
<dbReference type="GO" id="GO:0051539">
    <property type="term" value="F:4 iron, 4 sulfur cluster binding"/>
    <property type="evidence" value="ECO:0007669"/>
    <property type="project" value="UniProtKB-UniRule"/>
</dbReference>
<dbReference type="GO" id="GO:0016992">
    <property type="term" value="F:lipoate synthase activity"/>
    <property type="evidence" value="ECO:0007669"/>
    <property type="project" value="UniProtKB-UniRule"/>
</dbReference>
<dbReference type="GO" id="GO:0046872">
    <property type="term" value="F:metal ion binding"/>
    <property type="evidence" value="ECO:0007669"/>
    <property type="project" value="UniProtKB-KW"/>
</dbReference>
<dbReference type="CDD" id="cd01335">
    <property type="entry name" value="Radical_SAM"/>
    <property type="match status" value="1"/>
</dbReference>
<dbReference type="Gene3D" id="3.20.20.70">
    <property type="entry name" value="Aldolase class I"/>
    <property type="match status" value="1"/>
</dbReference>
<dbReference type="HAMAP" id="MF_00206">
    <property type="entry name" value="Lipoyl_synth"/>
    <property type="match status" value="1"/>
</dbReference>
<dbReference type="InterPro" id="IPR013785">
    <property type="entry name" value="Aldolase_TIM"/>
</dbReference>
<dbReference type="InterPro" id="IPR006638">
    <property type="entry name" value="Elp3/MiaA/NifB-like_rSAM"/>
</dbReference>
<dbReference type="InterPro" id="IPR003698">
    <property type="entry name" value="Lipoyl_synth"/>
</dbReference>
<dbReference type="InterPro" id="IPR007197">
    <property type="entry name" value="rSAM"/>
</dbReference>
<dbReference type="NCBIfam" id="TIGR00510">
    <property type="entry name" value="lipA"/>
    <property type="match status" value="1"/>
</dbReference>
<dbReference type="NCBIfam" id="NF004019">
    <property type="entry name" value="PRK05481.1"/>
    <property type="match status" value="1"/>
</dbReference>
<dbReference type="NCBIfam" id="NF009544">
    <property type="entry name" value="PRK12928.1"/>
    <property type="match status" value="1"/>
</dbReference>
<dbReference type="PANTHER" id="PTHR10949">
    <property type="entry name" value="LIPOYL SYNTHASE"/>
    <property type="match status" value="1"/>
</dbReference>
<dbReference type="PANTHER" id="PTHR10949:SF0">
    <property type="entry name" value="LIPOYL SYNTHASE, MITOCHONDRIAL"/>
    <property type="match status" value="1"/>
</dbReference>
<dbReference type="Pfam" id="PF04055">
    <property type="entry name" value="Radical_SAM"/>
    <property type="match status" value="1"/>
</dbReference>
<dbReference type="PIRSF" id="PIRSF005963">
    <property type="entry name" value="Lipoyl_synth"/>
    <property type="match status" value="1"/>
</dbReference>
<dbReference type="SFLD" id="SFLDF00271">
    <property type="entry name" value="lipoyl_synthase"/>
    <property type="match status" value="1"/>
</dbReference>
<dbReference type="SFLD" id="SFLDS00029">
    <property type="entry name" value="Radical_SAM"/>
    <property type="match status" value="1"/>
</dbReference>
<dbReference type="SMART" id="SM00729">
    <property type="entry name" value="Elp3"/>
    <property type="match status" value="1"/>
</dbReference>
<dbReference type="SUPFAM" id="SSF102114">
    <property type="entry name" value="Radical SAM enzymes"/>
    <property type="match status" value="1"/>
</dbReference>
<dbReference type="PROSITE" id="PS51918">
    <property type="entry name" value="RADICAL_SAM"/>
    <property type="match status" value="1"/>
</dbReference>
<proteinExistence type="inferred from homology"/>
<keyword id="KW-0004">4Fe-4S</keyword>
<keyword id="KW-0963">Cytoplasm</keyword>
<keyword id="KW-0408">Iron</keyword>
<keyword id="KW-0411">Iron-sulfur</keyword>
<keyword id="KW-0479">Metal-binding</keyword>
<keyword id="KW-1185">Reference proteome</keyword>
<keyword id="KW-0949">S-adenosyl-L-methionine</keyword>
<keyword id="KW-0808">Transferase</keyword>
<accession>C3PHK6</accession>
<protein>
    <recommendedName>
        <fullName evidence="1">Lipoyl synthase</fullName>
        <ecNumber evidence="1">2.8.1.8</ecNumber>
    </recommendedName>
    <alternativeName>
        <fullName evidence="1">Lip-syn</fullName>
        <shortName evidence="1">LS</shortName>
    </alternativeName>
    <alternativeName>
        <fullName evidence="1">Lipoate synthase</fullName>
    </alternativeName>
    <alternativeName>
        <fullName evidence="1">Lipoic acid synthase</fullName>
    </alternativeName>
    <alternativeName>
        <fullName evidence="1">Sulfur insertion protein LipA</fullName>
    </alternativeName>
</protein>
<sequence length="363" mass="40960">MTVKPEGRKMLRIEKKNAESPIEQKPRWIRNQVRTGPGYEDMKSRVTGASLHTVCQEAGCPNIHECWESREATFLIGGDKCTRRCDFCDIATGKPAELDRDEPRRVAENIQEMDLNYTTITGVTRDDLPDEGAWLYAEVVRKIHELNPNTGVENLTPDFSGKPDLLQEVFEARPEVFAHNLETVPRIFKRIRPAFRYERSLDVIRQAHDFGLITKSNLILGMGETAEEIEEALRDLRSAGCDIITITQYLRPGPRFHPIERWVRPEEFVEHSKLAKELGFGGVMSGPLVRSSYRAGRLYVQAMEARGLELPENLKHLAETSQGATAQEASTLLEKYGPSEETPVTTRMAKTPAQSNSVAATIR</sequence>
<evidence type="ECO:0000255" key="1">
    <source>
        <dbReference type="HAMAP-Rule" id="MF_00206"/>
    </source>
</evidence>
<evidence type="ECO:0000255" key="2">
    <source>
        <dbReference type="PROSITE-ProRule" id="PRU01266"/>
    </source>
</evidence>
<evidence type="ECO:0000256" key="3">
    <source>
        <dbReference type="SAM" id="MobiDB-lite"/>
    </source>
</evidence>
<feature type="chain" id="PRO_1000124628" description="Lipoyl synthase">
    <location>
        <begin position="1"/>
        <end position="363"/>
    </location>
</feature>
<feature type="domain" description="Radical SAM core" evidence="2">
    <location>
        <begin position="67"/>
        <end position="281"/>
    </location>
</feature>
<feature type="region of interest" description="Disordered" evidence="3">
    <location>
        <begin position="338"/>
        <end position="363"/>
    </location>
</feature>
<feature type="compositionally biased region" description="Polar residues" evidence="3">
    <location>
        <begin position="352"/>
        <end position="363"/>
    </location>
</feature>
<feature type="binding site" evidence="1">
    <location>
        <position position="55"/>
    </location>
    <ligand>
        <name>[4Fe-4S] cluster</name>
        <dbReference type="ChEBI" id="CHEBI:49883"/>
        <label>1</label>
    </ligand>
</feature>
<feature type="binding site" evidence="1">
    <location>
        <position position="60"/>
    </location>
    <ligand>
        <name>[4Fe-4S] cluster</name>
        <dbReference type="ChEBI" id="CHEBI:49883"/>
        <label>1</label>
    </ligand>
</feature>
<feature type="binding site" evidence="1">
    <location>
        <position position="66"/>
    </location>
    <ligand>
        <name>[4Fe-4S] cluster</name>
        <dbReference type="ChEBI" id="CHEBI:49883"/>
        <label>1</label>
    </ligand>
</feature>
<feature type="binding site" evidence="1">
    <location>
        <position position="81"/>
    </location>
    <ligand>
        <name>[4Fe-4S] cluster</name>
        <dbReference type="ChEBI" id="CHEBI:49883"/>
        <label>2</label>
        <note>4Fe-4S-S-AdoMet</note>
    </ligand>
</feature>
<feature type="binding site" evidence="1">
    <location>
        <position position="85"/>
    </location>
    <ligand>
        <name>[4Fe-4S] cluster</name>
        <dbReference type="ChEBI" id="CHEBI:49883"/>
        <label>2</label>
        <note>4Fe-4S-S-AdoMet</note>
    </ligand>
</feature>
<feature type="binding site" evidence="1">
    <location>
        <position position="88"/>
    </location>
    <ligand>
        <name>[4Fe-4S] cluster</name>
        <dbReference type="ChEBI" id="CHEBI:49883"/>
        <label>2</label>
        <note>4Fe-4S-S-AdoMet</note>
    </ligand>
</feature>
<feature type="binding site" evidence="1">
    <location>
        <position position="292"/>
    </location>
    <ligand>
        <name>[4Fe-4S] cluster</name>
        <dbReference type="ChEBI" id="CHEBI:49883"/>
        <label>1</label>
    </ligand>
</feature>
<comment type="function">
    <text evidence="1">Catalyzes the radical-mediated insertion of two sulfur atoms into the C-6 and C-8 positions of the octanoyl moiety bound to the lipoyl domains of lipoate-dependent enzymes, thereby converting the octanoylated domains into lipoylated derivatives.</text>
</comment>
<comment type="catalytic activity">
    <reaction evidence="1">
        <text>[[Fe-S] cluster scaffold protein carrying a second [4Fe-4S](2+) cluster] + N(6)-octanoyl-L-lysyl-[protein] + 2 oxidized [2Fe-2S]-[ferredoxin] + 2 S-adenosyl-L-methionine + 4 H(+) = [[Fe-S] cluster scaffold protein] + N(6)-[(R)-dihydrolipoyl]-L-lysyl-[protein] + 4 Fe(3+) + 2 hydrogen sulfide + 2 5'-deoxyadenosine + 2 L-methionine + 2 reduced [2Fe-2S]-[ferredoxin]</text>
        <dbReference type="Rhea" id="RHEA:16585"/>
        <dbReference type="Rhea" id="RHEA-COMP:9928"/>
        <dbReference type="Rhea" id="RHEA-COMP:10000"/>
        <dbReference type="Rhea" id="RHEA-COMP:10001"/>
        <dbReference type="Rhea" id="RHEA-COMP:10475"/>
        <dbReference type="Rhea" id="RHEA-COMP:14568"/>
        <dbReference type="Rhea" id="RHEA-COMP:14569"/>
        <dbReference type="ChEBI" id="CHEBI:15378"/>
        <dbReference type="ChEBI" id="CHEBI:17319"/>
        <dbReference type="ChEBI" id="CHEBI:29034"/>
        <dbReference type="ChEBI" id="CHEBI:29919"/>
        <dbReference type="ChEBI" id="CHEBI:33722"/>
        <dbReference type="ChEBI" id="CHEBI:33737"/>
        <dbReference type="ChEBI" id="CHEBI:33738"/>
        <dbReference type="ChEBI" id="CHEBI:57844"/>
        <dbReference type="ChEBI" id="CHEBI:59789"/>
        <dbReference type="ChEBI" id="CHEBI:78809"/>
        <dbReference type="ChEBI" id="CHEBI:83100"/>
        <dbReference type="EC" id="2.8.1.8"/>
    </reaction>
</comment>
<comment type="cofactor">
    <cofactor evidence="1">
        <name>[4Fe-4S] cluster</name>
        <dbReference type="ChEBI" id="CHEBI:49883"/>
    </cofactor>
    <text evidence="1">Binds 2 [4Fe-4S] clusters per subunit. One cluster is coordinated with 3 cysteines and an exchangeable S-adenosyl-L-methionine.</text>
</comment>
<comment type="pathway">
    <text evidence="1">Protein modification; protein lipoylation via endogenous pathway; protein N(6)-(lipoyl)lysine from octanoyl-[acyl-carrier-protein]: step 2/2.</text>
</comment>
<comment type="subcellular location">
    <subcellularLocation>
        <location evidence="1">Cytoplasm</location>
    </subcellularLocation>
</comment>
<comment type="similarity">
    <text evidence="1">Belongs to the radical SAM superfamily. Lipoyl synthase family.</text>
</comment>
<organism>
    <name type="scientific">Corynebacterium aurimucosum (strain ATCC 700975 / DSM 44827 / CIP 107346 / CN-1)</name>
    <name type="common">Corynebacterium nigricans</name>
    <dbReference type="NCBI Taxonomy" id="548476"/>
    <lineage>
        <taxon>Bacteria</taxon>
        <taxon>Bacillati</taxon>
        <taxon>Actinomycetota</taxon>
        <taxon>Actinomycetes</taxon>
        <taxon>Mycobacteriales</taxon>
        <taxon>Corynebacteriaceae</taxon>
        <taxon>Corynebacterium</taxon>
    </lineage>
</organism>
<reference key="1">
    <citation type="journal article" date="2010" name="BMC Genomics">
        <title>Complete genome sequence and lifestyle of black-pigmented Corynebacterium aurimucosum ATCC 700975 (formerly C. nigricans CN-1) isolated from a vaginal swab of a woman with spontaneous abortion.</title>
        <authorList>
            <person name="Trost E."/>
            <person name="Gotker S."/>
            <person name="Schneider J."/>
            <person name="Schneiker-Bekel S."/>
            <person name="Szczepanowski R."/>
            <person name="Tilker A."/>
            <person name="Viehoever P."/>
            <person name="Arnold W."/>
            <person name="Bekel T."/>
            <person name="Blom J."/>
            <person name="Gartemann K.H."/>
            <person name="Linke B."/>
            <person name="Goesmann A."/>
            <person name="Puhler A."/>
            <person name="Shukla S.K."/>
            <person name="Tauch A."/>
        </authorList>
    </citation>
    <scope>NUCLEOTIDE SEQUENCE [LARGE SCALE GENOMIC DNA]</scope>
    <source>
        <strain>ATCC 700975 / DSM 44827 / CIP 107346 / CN-1</strain>
    </source>
</reference>